<accession>B7N0K2</accession>
<gene>
    <name evidence="1" type="primary">glnE</name>
    <name type="ordered locus">ECED1_3721</name>
</gene>
<protein>
    <recommendedName>
        <fullName evidence="1">Bifunctional glutamine synthetase adenylyltransferase/adenylyl-removing enzyme</fullName>
    </recommendedName>
    <alternativeName>
        <fullName evidence="1">ATP:glutamine synthetase adenylyltransferase</fullName>
    </alternativeName>
    <alternativeName>
        <fullName evidence="1">ATase</fullName>
    </alternativeName>
    <domain>
        <recommendedName>
            <fullName evidence="1">Glutamine synthetase adenylyl-L-tyrosine phosphorylase</fullName>
            <ecNumber evidence="1">2.7.7.89</ecNumber>
        </recommendedName>
        <alternativeName>
            <fullName evidence="1">Adenylyl removase</fullName>
            <shortName evidence="1">AR</shortName>
            <shortName evidence="1">AT-N</shortName>
        </alternativeName>
    </domain>
    <domain>
        <recommendedName>
            <fullName evidence="1">Glutamine synthetase adenylyl transferase</fullName>
            <ecNumber evidence="1">2.7.7.42</ecNumber>
        </recommendedName>
        <alternativeName>
            <fullName evidence="1">Adenylyl transferase</fullName>
            <shortName evidence="1">AT</shortName>
            <shortName evidence="1">AT-C</shortName>
        </alternativeName>
    </domain>
</protein>
<sequence length="946" mass="108423">MKPLSSPLQQYWQTVVERLPEPLAEESLSAQAKSVLTFSDFVQDSVIAHPEWLTELESQPPQADEWQHYAAWLQEALSNVSDEAGLMRELRLFRRRIMVRIAWAQTLALVTEESILQQLSHLAEMLIVAARDWLYDACCREWGTPCNAQGEAQPLLILGMGKLGGGELNFSSDIDLIFAWPEHGCTQGGRRELDNAQFFTRMGQRLIKVLDQPTQDGFVYRVDMRLRPFGESGPLVLSFAALEDYYQEQGRDWERYAMVKARIMGDSDGVYANELRAMLRPFVFRRYIDFSVIQSLRNMKGMIAREVRRRGLTDNIKLGAGGIREIEFIVQVFQLIRGGREPSLQSRSLLPTLSAIAALHLLSENDAEQLRVAYLFLRRLENLLQSINDEQTQTLPFDELNRARLAWAMDFADWPQLTGVLTAHMANVRRVFNELIGDDESETQEESLSEQWRELWQDALQEDDTTPVLAHLSEDDRKQVLMLIADFRKELDKRTIGPRGRQVLDHLMPHLLSDVCAREDAAVTLSRITALLVGIVTRTTYLELLSEFPAALKHLISLCAASPMIASQLARYPLLLDELLDPNTLYQPTATDAYRDELRQYLLRVPEDDEEQQLEALRQFKQAQLLRIAAADIAGTLPVMKVSDHLTWLAEAMIDAVVQQAWVQMVARYGKPNHLNEREGRGFAVVGYGKLGGWELGYSSDLDLIFLHDCPMDAMTDGEREIDGRQFYLRLAQRIMHLFSTRTSSGILYEVDARLRPSGAAGMLVTSAEAFADYQKNEAWTWEHQALVRARVVYGDPQLTAHFDAVRREIMTLPREGKTLQTEVREMREKMRAHLGNKHRDRFDIKADEGGITDIEFITQYLVLRYAHEKPKLTRWSDNVRILELLAQNDIMEEQEAMALTRAYTTLRDELHHLALQELPGHVSEDCFTAERELVRASWQKWLVEE</sequence>
<organism>
    <name type="scientific">Escherichia coli O81 (strain ED1a)</name>
    <dbReference type="NCBI Taxonomy" id="585397"/>
    <lineage>
        <taxon>Bacteria</taxon>
        <taxon>Pseudomonadati</taxon>
        <taxon>Pseudomonadota</taxon>
        <taxon>Gammaproteobacteria</taxon>
        <taxon>Enterobacterales</taxon>
        <taxon>Enterobacteriaceae</taxon>
        <taxon>Escherichia</taxon>
    </lineage>
</organism>
<name>GLNE_ECO81</name>
<proteinExistence type="inferred from homology"/>
<evidence type="ECO:0000255" key="1">
    <source>
        <dbReference type="HAMAP-Rule" id="MF_00802"/>
    </source>
</evidence>
<keyword id="KW-0067">ATP-binding</keyword>
<keyword id="KW-0460">Magnesium</keyword>
<keyword id="KW-0511">Multifunctional enzyme</keyword>
<keyword id="KW-0547">Nucleotide-binding</keyword>
<keyword id="KW-0548">Nucleotidyltransferase</keyword>
<keyword id="KW-0808">Transferase</keyword>
<feature type="chain" id="PRO_1000148543" description="Bifunctional glutamine synthetase adenylyltransferase/adenylyl-removing enzyme">
    <location>
        <begin position="1"/>
        <end position="946"/>
    </location>
</feature>
<feature type="region of interest" description="Adenylyl removase" evidence="1">
    <location>
        <begin position="1"/>
        <end position="440"/>
    </location>
</feature>
<feature type="region of interest" description="Adenylyl transferase" evidence="1">
    <location>
        <begin position="449"/>
        <end position="946"/>
    </location>
</feature>
<reference key="1">
    <citation type="journal article" date="2009" name="PLoS Genet.">
        <title>Organised genome dynamics in the Escherichia coli species results in highly diverse adaptive paths.</title>
        <authorList>
            <person name="Touchon M."/>
            <person name="Hoede C."/>
            <person name="Tenaillon O."/>
            <person name="Barbe V."/>
            <person name="Baeriswyl S."/>
            <person name="Bidet P."/>
            <person name="Bingen E."/>
            <person name="Bonacorsi S."/>
            <person name="Bouchier C."/>
            <person name="Bouvet O."/>
            <person name="Calteau A."/>
            <person name="Chiapello H."/>
            <person name="Clermont O."/>
            <person name="Cruveiller S."/>
            <person name="Danchin A."/>
            <person name="Diard M."/>
            <person name="Dossat C."/>
            <person name="Karoui M.E."/>
            <person name="Frapy E."/>
            <person name="Garry L."/>
            <person name="Ghigo J.M."/>
            <person name="Gilles A.M."/>
            <person name="Johnson J."/>
            <person name="Le Bouguenec C."/>
            <person name="Lescat M."/>
            <person name="Mangenot S."/>
            <person name="Martinez-Jehanne V."/>
            <person name="Matic I."/>
            <person name="Nassif X."/>
            <person name="Oztas S."/>
            <person name="Petit M.A."/>
            <person name="Pichon C."/>
            <person name="Rouy Z."/>
            <person name="Ruf C.S."/>
            <person name="Schneider D."/>
            <person name="Tourret J."/>
            <person name="Vacherie B."/>
            <person name="Vallenet D."/>
            <person name="Medigue C."/>
            <person name="Rocha E.P.C."/>
            <person name="Denamur E."/>
        </authorList>
    </citation>
    <scope>NUCLEOTIDE SEQUENCE [LARGE SCALE GENOMIC DNA]</scope>
    <source>
        <strain>ED1a</strain>
    </source>
</reference>
<dbReference type="EC" id="2.7.7.89" evidence="1"/>
<dbReference type="EC" id="2.7.7.42" evidence="1"/>
<dbReference type="EMBL" id="CU928162">
    <property type="protein sequence ID" value="CAR09870.2"/>
    <property type="molecule type" value="Genomic_DNA"/>
</dbReference>
<dbReference type="RefSeq" id="WP_012601759.1">
    <property type="nucleotide sequence ID" value="NC_011745.1"/>
</dbReference>
<dbReference type="SMR" id="B7N0K2"/>
<dbReference type="KEGG" id="ecq:ECED1_3721"/>
<dbReference type="HOGENOM" id="CLU_006233_0_1_6"/>
<dbReference type="Proteomes" id="UP000000748">
    <property type="component" value="Chromosome"/>
</dbReference>
<dbReference type="GO" id="GO:0005829">
    <property type="term" value="C:cytosol"/>
    <property type="evidence" value="ECO:0007669"/>
    <property type="project" value="TreeGrafter"/>
</dbReference>
<dbReference type="GO" id="GO:0008882">
    <property type="term" value="F:[glutamate-ammonia-ligase] adenylyltransferase activity"/>
    <property type="evidence" value="ECO:0007669"/>
    <property type="project" value="UniProtKB-UniRule"/>
</dbReference>
<dbReference type="GO" id="GO:0047388">
    <property type="term" value="F:[glutamine synthetase]-adenylyl-L-tyrosine phosphorylase activity"/>
    <property type="evidence" value="ECO:0007669"/>
    <property type="project" value="UniProtKB-EC"/>
</dbReference>
<dbReference type="GO" id="GO:0005524">
    <property type="term" value="F:ATP binding"/>
    <property type="evidence" value="ECO:0007669"/>
    <property type="project" value="UniProtKB-UniRule"/>
</dbReference>
<dbReference type="GO" id="GO:0000287">
    <property type="term" value="F:magnesium ion binding"/>
    <property type="evidence" value="ECO:0007669"/>
    <property type="project" value="UniProtKB-UniRule"/>
</dbReference>
<dbReference type="GO" id="GO:0000820">
    <property type="term" value="P:regulation of glutamine family amino acid metabolic process"/>
    <property type="evidence" value="ECO:0007669"/>
    <property type="project" value="UniProtKB-UniRule"/>
</dbReference>
<dbReference type="CDD" id="cd05401">
    <property type="entry name" value="NT_GlnE_GlnD_like"/>
    <property type="match status" value="2"/>
</dbReference>
<dbReference type="FunFam" id="1.10.4050.10:FF:000001">
    <property type="entry name" value="Bifunctional glutamine synthetase adenylyltransferase/adenylyl-removing enzyme"/>
    <property type="match status" value="1"/>
</dbReference>
<dbReference type="FunFam" id="1.20.120.1510:FF:000001">
    <property type="entry name" value="Bifunctional glutamine synthetase adenylyltransferase/adenylyl-removing enzyme"/>
    <property type="match status" value="1"/>
</dbReference>
<dbReference type="FunFam" id="1.20.120.330:FF:000005">
    <property type="entry name" value="Bifunctional glutamine synthetase adenylyltransferase/adenylyl-removing enzyme"/>
    <property type="match status" value="1"/>
</dbReference>
<dbReference type="FunFam" id="1.20.120.330:FF:000008">
    <property type="entry name" value="Bifunctional glutamine synthetase adenylyltransferase/adenylyl-removing enzyme"/>
    <property type="match status" value="1"/>
</dbReference>
<dbReference type="FunFam" id="3.30.460.10:FF:000009">
    <property type="entry name" value="Bifunctional glutamine synthetase adenylyltransferase/adenylyl-removing enzyme"/>
    <property type="match status" value="1"/>
</dbReference>
<dbReference type="FunFam" id="3.30.460.10:FF:000014">
    <property type="entry name" value="Bifunctional glutamine synthetase adenylyltransferase/adenylyl-removing enzyme"/>
    <property type="match status" value="1"/>
</dbReference>
<dbReference type="Gene3D" id="1.20.120.1510">
    <property type="match status" value="1"/>
</dbReference>
<dbReference type="Gene3D" id="3.30.460.10">
    <property type="entry name" value="Beta Polymerase, domain 2"/>
    <property type="match status" value="2"/>
</dbReference>
<dbReference type="Gene3D" id="1.10.4050.10">
    <property type="entry name" value="Glutamine synthase adenylyltransferase GlnE"/>
    <property type="match status" value="1"/>
</dbReference>
<dbReference type="Gene3D" id="1.20.120.330">
    <property type="entry name" value="Nucleotidyltransferases domain 2"/>
    <property type="match status" value="2"/>
</dbReference>
<dbReference type="HAMAP" id="MF_00802">
    <property type="entry name" value="GlnE"/>
    <property type="match status" value="1"/>
</dbReference>
<dbReference type="InterPro" id="IPR023057">
    <property type="entry name" value="GlnE"/>
</dbReference>
<dbReference type="InterPro" id="IPR005190">
    <property type="entry name" value="GlnE_rpt_dom"/>
</dbReference>
<dbReference type="InterPro" id="IPR043519">
    <property type="entry name" value="NT_sf"/>
</dbReference>
<dbReference type="InterPro" id="IPR013546">
    <property type="entry name" value="PII_UdlTrfase/GS_AdlTrfase"/>
</dbReference>
<dbReference type="NCBIfam" id="NF008292">
    <property type="entry name" value="PRK11072.1"/>
    <property type="match status" value="1"/>
</dbReference>
<dbReference type="PANTHER" id="PTHR30621:SF0">
    <property type="entry name" value="BIFUNCTIONAL GLUTAMINE SYNTHETASE ADENYLYLTRANSFERASE_ADENYLYL-REMOVING ENZYME"/>
    <property type="match status" value="1"/>
</dbReference>
<dbReference type="PANTHER" id="PTHR30621">
    <property type="entry name" value="GLUTAMINE SYNTHETASE ADENYLYLTRANSFERASE"/>
    <property type="match status" value="1"/>
</dbReference>
<dbReference type="Pfam" id="PF08335">
    <property type="entry name" value="GlnD_UR_UTase"/>
    <property type="match status" value="2"/>
</dbReference>
<dbReference type="Pfam" id="PF03710">
    <property type="entry name" value="GlnE"/>
    <property type="match status" value="2"/>
</dbReference>
<dbReference type="SUPFAM" id="SSF81301">
    <property type="entry name" value="Nucleotidyltransferase"/>
    <property type="match status" value="2"/>
</dbReference>
<dbReference type="SUPFAM" id="SSF81593">
    <property type="entry name" value="Nucleotidyltransferase substrate binding subunit/domain"/>
    <property type="match status" value="2"/>
</dbReference>
<comment type="function">
    <text evidence="1">Involved in the regulation of glutamine synthetase GlnA, a key enzyme in the process to assimilate ammonia. When cellular nitrogen levels are high, the C-terminal adenylyl transferase (AT) inactivates GlnA by covalent transfer of an adenylyl group from ATP to specific tyrosine residue of GlnA, thus reducing its activity. Conversely, when nitrogen levels are low, the N-terminal adenylyl removase (AR) activates GlnA by removing the adenylyl group by phosphorolysis, increasing its activity. The regulatory region of GlnE binds the signal transduction protein PII (GlnB) which indicates the nitrogen status of the cell.</text>
</comment>
<comment type="catalytic activity">
    <reaction evidence="1">
        <text>[glutamine synthetase]-O(4)-(5'-adenylyl)-L-tyrosine + phosphate = [glutamine synthetase]-L-tyrosine + ADP</text>
        <dbReference type="Rhea" id="RHEA:43716"/>
        <dbReference type="Rhea" id="RHEA-COMP:10660"/>
        <dbReference type="Rhea" id="RHEA-COMP:10661"/>
        <dbReference type="ChEBI" id="CHEBI:43474"/>
        <dbReference type="ChEBI" id="CHEBI:46858"/>
        <dbReference type="ChEBI" id="CHEBI:83624"/>
        <dbReference type="ChEBI" id="CHEBI:456216"/>
        <dbReference type="EC" id="2.7.7.89"/>
    </reaction>
</comment>
<comment type="catalytic activity">
    <reaction evidence="1">
        <text>[glutamine synthetase]-L-tyrosine + ATP = [glutamine synthetase]-O(4)-(5'-adenylyl)-L-tyrosine + diphosphate</text>
        <dbReference type="Rhea" id="RHEA:18589"/>
        <dbReference type="Rhea" id="RHEA-COMP:10660"/>
        <dbReference type="Rhea" id="RHEA-COMP:10661"/>
        <dbReference type="ChEBI" id="CHEBI:30616"/>
        <dbReference type="ChEBI" id="CHEBI:33019"/>
        <dbReference type="ChEBI" id="CHEBI:46858"/>
        <dbReference type="ChEBI" id="CHEBI:83624"/>
        <dbReference type="EC" id="2.7.7.42"/>
    </reaction>
</comment>
<comment type="cofactor">
    <cofactor evidence="1">
        <name>Mg(2+)</name>
        <dbReference type="ChEBI" id="CHEBI:18420"/>
    </cofactor>
</comment>
<comment type="similarity">
    <text evidence="1">Belongs to the GlnE family.</text>
</comment>